<comment type="function">
    <text evidence="1">ATP-dependent specificity component of the Clp protease. It directs the protease to specific substrates. Can perform chaperone functions in the absence of ClpP.</text>
</comment>
<comment type="subunit">
    <text evidence="1">Component of the ClpX-ClpP complex. Forms a hexameric ring that, in the presence of ATP, binds to fourteen ClpP subunits assembled into a disk-like structure with a central cavity, resembling the structure of eukaryotic proteasomes.</text>
</comment>
<comment type="similarity">
    <text evidence="1">Belongs to the ClpX chaperone family.</text>
</comment>
<organism>
    <name type="scientific">Rickettsia bellii (strain RML369-C)</name>
    <dbReference type="NCBI Taxonomy" id="336407"/>
    <lineage>
        <taxon>Bacteria</taxon>
        <taxon>Pseudomonadati</taxon>
        <taxon>Pseudomonadota</taxon>
        <taxon>Alphaproteobacteria</taxon>
        <taxon>Rickettsiales</taxon>
        <taxon>Rickettsiaceae</taxon>
        <taxon>Rickettsieae</taxon>
        <taxon>Rickettsia</taxon>
        <taxon>belli group</taxon>
    </lineage>
</organism>
<sequence>MVVEANKKELICSFCSKKQHEVKKLIAGPAVFICDECINLCMDIMEEESKIALKQITYTIPTPQKICSVLNDYVVGQEQAKKVLAVAVYNHYKRLEYVQSGNNDVELNKSNILLIGPTGSGKTLLAQTLAKILDVPFTMADATSLTEAGYVGEDVENILLRLLQAAEFNVAKAQKGIIYIDEVDKIARKSENPSITRDVSGEGVQQALLKIMEGTVASVPPQGGRKHPQQDFVQLDTSNILFICGGAFMGIDSIITSRTNNSSIGFAANVNIDKEKINREILKSLEIEDLTKFGLIPEFIGRLPIVTTLDDLDKEALVTILTKPKNAIVKQFKKQFELDEAELIVEDSALEAIAEKALAKKTGARGLRSIIEHLLLDSMYKVAELKKQRVTITEDVVKGLIEPIITSIITPTAKTSKKQAAVEDIPA</sequence>
<feature type="chain" id="PRO_0000277978" description="ATP-dependent Clp protease ATP-binding subunit ClpX">
    <location>
        <begin position="1"/>
        <end position="427"/>
    </location>
</feature>
<feature type="domain" description="ClpX-type ZB" evidence="2">
    <location>
        <begin position="1"/>
        <end position="53"/>
    </location>
</feature>
<feature type="binding site" evidence="2">
    <location>
        <position position="12"/>
    </location>
    <ligand>
        <name>Zn(2+)</name>
        <dbReference type="ChEBI" id="CHEBI:29105"/>
    </ligand>
</feature>
<feature type="binding site" evidence="2">
    <location>
        <position position="15"/>
    </location>
    <ligand>
        <name>Zn(2+)</name>
        <dbReference type="ChEBI" id="CHEBI:29105"/>
    </ligand>
</feature>
<feature type="binding site" evidence="2">
    <location>
        <position position="34"/>
    </location>
    <ligand>
        <name>Zn(2+)</name>
        <dbReference type="ChEBI" id="CHEBI:29105"/>
    </ligand>
</feature>
<feature type="binding site" evidence="2">
    <location>
        <position position="37"/>
    </location>
    <ligand>
        <name>Zn(2+)</name>
        <dbReference type="ChEBI" id="CHEBI:29105"/>
    </ligand>
</feature>
<feature type="binding site" evidence="1">
    <location>
        <begin position="117"/>
        <end position="124"/>
    </location>
    <ligand>
        <name>ATP</name>
        <dbReference type="ChEBI" id="CHEBI:30616"/>
    </ligand>
</feature>
<name>CLPX_RICBR</name>
<dbReference type="EMBL" id="CP000087">
    <property type="protein sequence ID" value="ABE04580.1"/>
    <property type="molecule type" value="Genomic_DNA"/>
</dbReference>
<dbReference type="RefSeq" id="WP_011477171.1">
    <property type="nucleotide sequence ID" value="NC_007940.1"/>
</dbReference>
<dbReference type="SMR" id="Q1RJ84"/>
<dbReference type="KEGG" id="rbe:RBE_0499"/>
<dbReference type="eggNOG" id="COG1219">
    <property type="taxonomic scope" value="Bacteria"/>
</dbReference>
<dbReference type="HOGENOM" id="CLU_014218_8_2_5"/>
<dbReference type="OrthoDB" id="9804062at2"/>
<dbReference type="Proteomes" id="UP000001951">
    <property type="component" value="Chromosome"/>
</dbReference>
<dbReference type="GO" id="GO:0009376">
    <property type="term" value="C:HslUV protease complex"/>
    <property type="evidence" value="ECO:0007669"/>
    <property type="project" value="TreeGrafter"/>
</dbReference>
<dbReference type="GO" id="GO:0005524">
    <property type="term" value="F:ATP binding"/>
    <property type="evidence" value="ECO:0007669"/>
    <property type="project" value="UniProtKB-UniRule"/>
</dbReference>
<dbReference type="GO" id="GO:0016887">
    <property type="term" value="F:ATP hydrolysis activity"/>
    <property type="evidence" value="ECO:0007669"/>
    <property type="project" value="InterPro"/>
</dbReference>
<dbReference type="GO" id="GO:0140662">
    <property type="term" value="F:ATP-dependent protein folding chaperone"/>
    <property type="evidence" value="ECO:0007669"/>
    <property type="project" value="InterPro"/>
</dbReference>
<dbReference type="GO" id="GO:0046983">
    <property type="term" value="F:protein dimerization activity"/>
    <property type="evidence" value="ECO:0007669"/>
    <property type="project" value="InterPro"/>
</dbReference>
<dbReference type="GO" id="GO:0051082">
    <property type="term" value="F:unfolded protein binding"/>
    <property type="evidence" value="ECO:0007669"/>
    <property type="project" value="UniProtKB-UniRule"/>
</dbReference>
<dbReference type="GO" id="GO:0008270">
    <property type="term" value="F:zinc ion binding"/>
    <property type="evidence" value="ECO:0007669"/>
    <property type="project" value="InterPro"/>
</dbReference>
<dbReference type="GO" id="GO:0051301">
    <property type="term" value="P:cell division"/>
    <property type="evidence" value="ECO:0007669"/>
    <property type="project" value="TreeGrafter"/>
</dbReference>
<dbReference type="GO" id="GO:0051603">
    <property type="term" value="P:proteolysis involved in protein catabolic process"/>
    <property type="evidence" value="ECO:0007669"/>
    <property type="project" value="TreeGrafter"/>
</dbReference>
<dbReference type="CDD" id="cd19497">
    <property type="entry name" value="RecA-like_ClpX"/>
    <property type="match status" value="1"/>
</dbReference>
<dbReference type="FunFam" id="1.10.8.60:FF:000002">
    <property type="entry name" value="ATP-dependent Clp protease ATP-binding subunit ClpX"/>
    <property type="match status" value="1"/>
</dbReference>
<dbReference type="FunFam" id="3.40.50.300:FF:000005">
    <property type="entry name" value="ATP-dependent Clp protease ATP-binding subunit ClpX"/>
    <property type="match status" value="1"/>
</dbReference>
<dbReference type="Gene3D" id="1.10.8.60">
    <property type="match status" value="1"/>
</dbReference>
<dbReference type="Gene3D" id="6.20.220.10">
    <property type="entry name" value="ClpX chaperone, C4-type zinc finger domain"/>
    <property type="match status" value="1"/>
</dbReference>
<dbReference type="Gene3D" id="3.40.50.300">
    <property type="entry name" value="P-loop containing nucleotide triphosphate hydrolases"/>
    <property type="match status" value="1"/>
</dbReference>
<dbReference type="HAMAP" id="MF_00175">
    <property type="entry name" value="ClpX"/>
    <property type="match status" value="1"/>
</dbReference>
<dbReference type="InterPro" id="IPR003593">
    <property type="entry name" value="AAA+_ATPase"/>
</dbReference>
<dbReference type="InterPro" id="IPR050052">
    <property type="entry name" value="ATP-dep_Clp_protease_ClpX"/>
</dbReference>
<dbReference type="InterPro" id="IPR003959">
    <property type="entry name" value="ATPase_AAA_core"/>
</dbReference>
<dbReference type="InterPro" id="IPR019489">
    <property type="entry name" value="Clp_ATPase_C"/>
</dbReference>
<dbReference type="InterPro" id="IPR004487">
    <property type="entry name" value="Clp_protease_ATP-bd_su_ClpX"/>
</dbReference>
<dbReference type="InterPro" id="IPR046425">
    <property type="entry name" value="ClpX_bact"/>
</dbReference>
<dbReference type="InterPro" id="IPR027417">
    <property type="entry name" value="P-loop_NTPase"/>
</dbReference>
<dbReference type="InterPro" id="IPR010603">
    <property type="entry name" value="Znf_CppX_C4"/>
</dbReference>
<dbReference type="InterPro" id="IPR038366">
    <property type="entry name" value="Znf_CppX_C4_sf"/>
</dbReference>
<dbReference type="NCBIfam" id="TIGR00382">
    <property type="entry name" value="clpX"/>
    <property type="match status" value="1"/>
</dbReference>
<dbReference type="NCBIfam" id="NF003745">
    <property type="entry name" value="PRK05342.1"/>
    <property type="match status" value="1"/>
</dbReference>
<dbReference type="PANTHER" id="PTHR48102:SF7">
    <property type="entry name" value="ATP-DEPENDENT CLP PROTEASE ATP-BINDING SUBUNIT CLPX-LIKE, MITOCHONDRIAL"/>
    <property type="match status" value="1"/>
</dbReference>
<dbReference type="PANTHER" id="PTHR48102">
    <property type="entry name" value="ATP-DEPENDENT CLP PROTEASE ATP-BINDING SUBUNIT CLPX-LIKE, MITOCHONDRIAL-RELATED"/>
    <property type="match status" value="1"/>
</dbReference>
<dbReference type="Pfam" id="PF07724">
    <property type="entry name" value="AAA_2"/>
    <property type="match status" value="1"/>
</dbReference>
<dbReference type="Pfam" id="PF10431">
    <property type="entry name" value="ClpB_D2-small"/>
    <property type="match status" value="1"/>
</dbReference>
<dbReference type="Pfam" id="PF06689">
    <property type="entry name" value="zf-C4_ClpX"/>
    <property type="match status" value="1"/>
</dbReference>
<dbReference type="SMART" id="SM00382">
    <property type="entry name" value="AAA"/>
    <property type="match status" value="1"/>
</dbReference>
<dbReference type="SMART" id="SM01086">
    <property type="entry name" value="ClpB_D2-small"/>
    <property type="match status" value="1"/>
</dbReference>
<dbReference type="SMART" id="SM00994">
    <property type="entry name" value="zf-C4_ClpX"/>
    <property type="match status" value="1"/>
</dbReference>
<dbReference type="SUPFAM" id="SSF57716">
    <property type="entry name" value="Glucocorticoid receptor-like (DNA-binding domain)"/>
    <property type="match status" value="1"/>
</dbReference>
<dbReference type="SUPFAM" id="SSF52540">
    <property type="entry name" value="P-loop containing nucleoside triphosphate hydrolases"/>
    <property type="match status" value="1"/>
</dbReference>
<dbReference type="PROSITE" id="PS51902">
    <property type="entry name" value="CLPX_ZB"/>
    <property type="match status" value="1"/>
</dbReference>
<accession>Q1RJ84</accession>
<keyword id="KW-0067">ATP-binding</keyword>
<keyword id="KW-0143">Chaperone</keyword>
<keyword id="KW-0479">Metal-binding</keyword>
<keyword id="KW-0547">Nucleotide-binding</keyword>
<keyword id="KW-0862">Zinc</keyword>
<proteinExistence type="inferred from homology"/>
<reference key="1">
    <citation type="journal article" date="2006" name="PLoS Genet.">
        <title>Genome sequence of Rickettsia bellii illuminates the role of amoebae in gene exchanges between intracellular pathogens.</title>
        <authorList>
            <person name="Ogata H."/>
            <person name="La Scola B."/>
            <person name="Audic S."/>
            <person name="Renesto P."/>
            <person name="Blanc G."/>
            <person name="Robert C."/>
            <person name="Fournier P.-E."/>
            <person name="Claverie J.-M."/>
            <person name="Raoult D."/>
        </authorList>
    </citation>
    <scope>NUCLEOTIDE SEQUENCE [LARGE SCALE GENOMIC DNA]</scope>
    <source>
        <strain>RML369-C</strain>
    </source>
</reference>
<gene>
    <name evidence="1" type="primary">clpX</name>
    <name type="ordered locus">RBE_0499</name>
</gene>
<evidence type="ECO:0000255" key="1">
    <source>
        <dbReference type="HAMAP-Rule" id="MF_00175"/>
    </source>
</evidence>
<evidence type="ECO:0000255" key="2">
    <source>
        <dbReference type="PROSITE-ProRule" id="PRU01250"/>
    </source>
</evidence>
<protein>
    <recommendedName>
        <fullName evidence="1">ATP-dependent Clp protease ATP-binding subunit ClpX</fullName>
    </recommendedName>
</protein>